<accession>A6ZRQ0</accession>
<gene>
    <name type="primary">SWT21</name>
    <name type="ORF">SCY_4611</name>
</gene>
<sequence length="357" mass="40308">MEKKVICQDIFWSCDGTSFVSVHNDFGIRQYLVPEESNTDKLNRNLLLPFTRFFRNQSIVSCAIDPFYTLYNENSDRLAGDRIVVGGKNFPLQLYSLMDGQCILSYDTMNKINGEYETVYSVKIDVESRVYTGSCRNKVAIYDKSRRDAVWMNQSTKKASKGRQSIISCFEEQPMGGQALSRGSLLCGSYANEMFQVDCRHQRLERLNYTRTVAGGIVQILTSDNGRYVYVVRRNSDAISIYDRRNLQHELNVLRLPFRIHHNSAKLKAYIDTAYGLSMGTPQGTILNWGRDLVEFGGVPSHNSVEDPLITSIPPESEWRTNLDSTIPATVVKNCPGDPELFALSHGGTISLCRFGG</sequence>
<organism>
    <name type="scientific">Saccharomyces cerevisiae (strain YJM789)</name>
    <name type="common">Baker's yeast</name>
    <dbReference type="NCBI Taxonomy" id="307796"/>
    <lineage>
        <taxon>Eukaryota</taxon>
        <taxon>Fungi</taxon>
        <taxon>Dikarya</taxon>
        <taxon>Ascomycota</taxon>
        <taxon>Saccharomycotina</taxon>
        <taxon>Saccharomycetes</taxon>
        <taxon>Saccharomycetales</taxon>
        <taxon>Saccharomycetaceae</taxon>
        <taxon>Saccharomyces</taxon>
    </lineage>
</organism>
<proteinExistence type="inferred from homology"/>
<evidence type="ECO:0000250" key="1"/>
<evidence type="ECO:0000305" key="2"/>
<name>SWT21_YEAS7</name>
<keyword id="KW-0507">mRNA processing</keyword>
<keyword id="KW-0508">mRNA splicing</keyword>
<keyword id="KW-0539">Nucleus</keyword>
<protein>
    <recommendedName>
        <fullName>Protein SWT21</fullName>
    </recommendedName>
    <alternativeName>
        <fullName>Synthetic With TGS1 protein 21</fullName>
    </alternativeName>
</protein>
<feature type="chain" id="PRO_0000405690" description="Protein SWT21">
    <location>
        <begin position="1"/>
        <end position="357"/>
    </location>
</feature>
<comment type="function">
    <text evidence="1">Involved in mRNA splicing. Helps to stabilize the U1 snRNP-5' splice site interaction (By similarity).</text>
</comment>
<comment type="subunit">
    <text evidence="1">Associates with snRNPs.</text>
</comment>
<comment type="subcellular location">
    <subcellularLocation>
        <location evidence="1">Nucleus</location>
    </subcellularLocation>
</comment>
<comment type="similarity">
    <text evidence="2">Belongs to the SWT21 family.</text>
</comment>
<dbReference type="EMBL" id="AAFW02000067">
    <property type="protein sequence ID" value="EDN62632.1"/>
    <property type="molecule type" value="Genomic_DNA"/>
</dbReference>
<dbReference type="SMR" id="A6ZRQ0"/>
<dbReference type="HOGENOM" id="CLU_662333_0_0_1"/>
<dbReference type="Proteomes" id="UP000007060">
    <property type="component" value="Unassembled WGS sequence"/>
</dbReference>
<dbReference type="GO" id="GO:0005634">
    <property type="term" value="C:nucleus"/>
    <property type="evidence" value="ECO:0007669"/>
    <property type="project" value="UniProtKB-SubCell"/>
</dbReference>
<dbReference type="GO" id="GO:0006397">
    <property type="term" value="P:mRNA processing"/>
    <property type="evidence" value="ECO:0007669"/>
    <property type="project" value="UniProtKB-KW"/>
</dbReference>
<dbReference type="GO" id="GO:0008380">
    <property type="term" value="P:RNA splicing"/>
    <property type="evidence" value="ECO:0007669"/>
    <property type="project" value="UniProtKB-KW"/>
</dbReference>
<dbReference type="Gene3D" id="2.130.10.10">
    <property type="entry name" value="YVTN repeat-like/Quinoprotein amine dehydrogenase"/>
    <property type="match status" value="1"/>
</dbReference>
<dbReference type="InterPro" id="IPR051150">
    <property type="entry name" value="SWT21/TCAB1_mRNA_Telomere"/>
</dbReference>
<dbReference type="InterPro" id="IPR015943">
    <property type="entry name" value="WD40/YVTN_repeat-like_dom_sf"/>
</dbReference>
<dbReference type="InterPro" id="IPR036322">
    <property type="entry name" value="WD40_repeat_dom_sf"/>
</dbReference>
<dbReference type="PANTHER" id="PTHR13211">
    <property type="entry name" value="TELOMERASE CAJAL BODY PROTEIN 1"/>
    <property type="match status" value="1"/>
</dbReference>
<dbReference type="PANTHER" id="PTHR13211:SF0">
    <property type="entry name" value="TELOMERASE CAJAL BODY PROTEIN 1"/>
    <property type="match status" value="1"/>
</dbReference>
<dbReference type="SUPFAM" id="SSF50978">
    <property type="entry name" value="WD40 repeat-like"/>
    <property type="match status" value="1"/>
</dbReference>
<reference key="1">
    <citation type="journal article" date="2007" name="Proc. Natl. Acad. Sci. U.S.A.">
        <title>Genome sequencing and comparative analysis of Saccharomyces cerevisiae strain YJM789.</title>
        <authorList>
            <person name="Wei W."/>
            <person name="McCusker J.H."/>
            <person name="Hyman R.W."/>
            <person name="Jones T."/>
            <person name="Ning Y."/>
            <person name="Cao Z."/>
            <person name="Gu Z."/>
            <person name="Bruno D."/>
            <person name="Miranda M."/>
            <person name="Nguyen M."/>
            <person name="Wilhelmy J."/>
            <person name="Komp C."/>
            <person name="Tamse R."/>
            <person name="Wang X."/>
            <person name="Jia P."/>
            <person name="Luedi P."/>
            <person name="Oefner P.J."/>
            <person name="David L."/>
            <person name="Dietrich F.S."/>
            <person name="Li Y."/>
            <person name="Davis R.W."/>
            <person name="Steinmetz L.M."/>
        </authorList>
    </citation>
    <scope>NUCLEOTIDE SEQUENCE [LARGE SCALE GENOMIC DNA]</scope>
    <source>
        <strain>YJM789</strain>
    </source>
</reference>